<sequence length="1007" mass="114047">MSNKLVKEKRVDQADLAWLTDPEVYEVNTIPPHSDHESFQSQEELEEGKSSLVQSLDGDWLIDYAENGQGPVNFYAEDFDDSNFKSVKVPGNLELQGFGQPQYVNVQYPWDGSEEIFPPQIPSKNPLASYVRYFDLDEAFWDKEVSLKFDGAATAIYVWLNGHFVGYGEDSFTPSEFMVTKFLKKENNRLAVALYKYSSASWLEDQDFWRMSGLFRSVTLQAKPRLHLEDLKLTASLTDNYQKGKLEVEANIAYRLPNASFKLEVRDSEGDLVAEKLGPIRSEQLEFTLADLPVAAWSAEKPNLYQVRLYLYQAGSLLEVSRQEVGFRNFELKDGIMYLNGQRIVFKGANRHEFDSKLGRAITEEDMIWDIKTMKRSNINAVRCSHYPNQSLFYRLCDKYGLYVIDEANLESHGTWEKVGGHEDPSFNVPGDDQHWLGASLSRVKNMMARDKNHASILIWSLGNESYAGTVFAQMADYVRKADPTRVQHYEGVTHNRKFDDATQIESRMYAPAKVIEEYLTNKPAKPFISVEYAHAMGNSVGDLAAYTALEKYPHYQGGFIWDWIDQGLEKDGHLLYGGDFDDRPTDYEFCGNGLVFADRTESPKLANVKALYANLKLEVKDGQLFLKNDNLFTNSSSYYFLTSLLVDGKLTYQSRPLTFGLEPGESGTFALPWPEVADEKGEVVYRVTAHLKEDLPWADEGFTVAEAEEVAQKLPEFKPEGRPDLVDSDYNLGLKGNNFQILFSKVKGWPVSLKYAGREYLKRLPEFTFWRALTDNDRGAGYGYDLARWENAGKYARLKDISCEVKEDSVLVKTAFTLPVALKGDLTVTYEVDGRGKIAVTADFPGAEEAGLLPAFGLNLALPKELTDYRYYGLGPNESYPDRLEGNYLGIYQGAVKKNFSPYRPQETGNRSKVRWYQLFDEKGGLEFTANGADLNLSALPYSAAQIEAADHAFELTNNYTWVRALSAQMGVGGDDSWGQKVHPEFCLDAQKARQLRLVIQPLLLK</sequence>
<gene>
    <name type="primary">lacZ</name>
</gene>
<organism>
    <name type="scientific">Lactobacillus delbrueckii subsp. bulgaricus</name>
    <dbReference type="NCBI Taxonomy" id="1585"/>
    <lineage>
        <taxon>Bacteria</taxon>
        <taxon>Bacillati</taxon>
        <taxon>Bacillota</taxon>
        <taxon>Bacilli</taxon>
        <taxon>Lactobacillales</taxon>
        <taxon>Lactobacillaceae</taxon>
        <taxon>Lactobacillus</taxon>
    </lineage>
</organism>
<evidence type="ECO:0000250" key="1"/>
<evidence type="ECO:0000256" key="2">
    <source>
        <dbReference type="SAM" id="MobiDB-lite"/>
    </source>
</evidence>
<evidence type="ECO:0000269" key="3">
    <source>
    </source>
</evidence>
<evidence type="ECO:0000305" key="4"/>
<proteinExistence type="evidence at protein level"/>
<comment type="catalytic activity">
    <reaction>
        <text>Hydrolysis of terminal non-reducing beta-D-galactose residues in beta-D-galactosides.</text>
        <dbReference type="EC" id="3.2.1.23"/>
    </reaction>
</comment>
<comment type="subunit">
    <text>Monomer.</text>
</comment>
<comment type="similarity">
    <text evidence="4">Belongs to the glycosyl hydrolase 2 family.</text>
</comment>
<name>BGAL_LACDE</name>
<feature type="initiator methionine" description="Removed" evidence="3">
    <location>
        <position position="1"/>
    </location>
</feature>
<feature type="chain" id="PRO_0000057664" description="Beta-galactosidase">
    <location>
        <begin position="2"/>
        <end position="1007"/>
    </location>
</feature>
<feature type="region of interest" description="Disordered" evidence="2">
    <location>
        <begin position="29"/>
        <end position="48"/>
    </location>
</feature>
<feature type="active site" description="Proton donor" evidence="1">
    <location>
        <position position="465"/>
    </location>
</feature>
<feature type="active site" description="Nucleophile" evidence="1">
    <location>
        <position position="532"/>
    </location>
</feature>
<keyword id="KW-0903">Direct protein sequencing</keyword>
<keyword id="KW-0326">Glycosidase</keyword>
<keyword id="KW-0378">Hydrolase</keyword>
<accession>P0C1Y0</accession>
<accession>P20043</accession>
<reference key="1">
    <citation type="journal article" date="1989" name="J. Bacteriol.">
        <title>Expression and nucleotide sequence of the Lactobacillus bulgaricus beta-galactosidase gene cloned in Escherichia coli.</title>
        <authorList>
            <person name="Schmidt B.F."/>
            <person name="Adams R.M."/>
            <person name="Requadt C."/>
            <person name="Power S."/>
            <person name="Mainzer S.E."/>
        </authorList>
    </citation>
    <scope>NUCLEOTIDE SEQUENCE [GENOMIC DNA]</scope>
    <scope>PROTEIN SEQUENCE OF 2-30</scope>
    <source>
        <strain>B131</strain>
    </source>
</reference>
<dbReference type="EC" id="3.2.1.23"/>
<dbReference type="EMBL" id="M23530">
    <property type="protein sequence ID" value="AAA25240.1"/>
    <property type="molecule type" value="Genomic_DNA"/>
</dbReference>
<dbReference type="PIR" id="A30093">
    <property type="entry name" value="A30093"/>
</dbReference>
<dbReference type="SMR" id="P0C1Y0"/>
<dbReference type="SABIO-RK" id="P0C1Y0"/>
<dbReference type="GO" id="GO:0009341">
    <property type="term" value="C:beta-galactosidase complex"/>
    <property type="evidence" value="ECO:0007669"/>
    <property type="project" value="InterPro"/>
</dbReference>
<dbReference type="GO" id="GO:0004565">
    <property type="term" value="F:beta-galactosidase activity"/>
    <property type="evidence" value="ECO:0007669"/>
    <property type="project" value="UniProtKB-EC"/>
</dbReference>
<dbReference type="GO" id="GO:0030246">
    <property type="term" value="F:carbohydrate binding"/>
    <property type="evidence" value="ECO:0007669"/>
    <property type="project" value="InterPro"/>
</dbReference>
<dbReference type="GO" id="GO:0005990">
    <property type="term" value="P:lactose catabolic process"/>
    <property type="evidence" value="ECO:0007669"/>
    <property type="project" value="TreeGrafter"/>
</dbReference>
<dbReference type="Gene3D" id="2.70.98.10">
    <property type="match status" value="1"/>
</dbReference>
<dbReference type="Gene3D" id="2.60.120.260">
    <property type="entry name" value="Galactose-binding domain-like"/>
    <property type="match status" value="1"/>
</dbReference>
<dbReference type="Gene3D" id="3.20.20.80">
    <property type="entry name" value="Glycosidases"/>
    <property type="match status" value="1"/>
</dbReference>
<dbReference type="Gene3D" id="2.60.40.10">
    <property type="entry name" value="Immunoglobulins"/>
    <property type="match status" value="2"/>
</dbReference>
<dbReference type="InterPro" id="IPR004199">
    <property type="entry name" value="B-gal_small/dom_5"/>
</dbReference>
<dbReference type="InterPro" id="IPR050347">
    <property type="entry name" value="Bact_Beta-galactosidase"/>
</dbReference>
<dbReference type="InterPro" id="IPR036156">
    <property type="entry name" value="Beta-gal/glucu_dom_sf"/>
</dbReference>
<dbReference type="InterPro" id="IPR011013">
    <property type="entry name" value="Gal_mutarotase_sf_dom"/>
</dbReference>
<dbReference type="InterPro" id="IPR008979">
    <property type="entry name" value="Galactose-bd-like_sf"/>
</dbReference>
<dbReference type="InterPro" id="IPR014718">
    <property type="entry name" value="GH-type_carb-bd"/>
</dbReference>
<dbReference type="InterPro" id="IPR006101">
    <property type="entry name" value="Glyco_hydro_2"/>
</dbReference>
<dbReference type="InterPro" id="IPR023232">
    <property type="entry name" value="Glyco_hydro_2_AS"/>
</dbReference>
<dbReference type="InterPro" id="IPR006103">
    <property type="entry name" value="Glyco_hydro_2_cat"/>
</dbReference>
<dbReference type="InterPro" id="IPR023230">
    <property type="entry name" value="Glyco_hydro_2_CS"/>
</dbReference>
<dbReference type="InterPro" id="IPR006102">
    <property type="entry name" value="Glyco_hydro_2_Ig-like"/>
</dbReference>
<dbReference type="InterPro" id="IPR006104">
    <property type="entry name" value="Glyco_hydro_2_N"/>
</dbReference>
<dbReference type="InterPro" id="IPR017853">
    <property type="entry name" value="Glycoside_hydrolase_SF"/>
</dbReference>
<dbReference type="InterPro" id="IPR013783">
    <property type="entry name" value="Ig-like_fold"/>
</dbReference>
<dbReference type="InterPro" id="IPR032312">
    <property type="entry name" value="LacZ_4"/>
</dbReference>
<dbReference type="PANTHER" id="PTHR46323">
    <property type="entry name" value="BETA-GALACTOSIDASE"/>
    <property type="match status" value="1"/>
</dbReference>
<dbReference type="PANTHER" id="PTHR46323:SF2">
    <property type="entry name" value="BETA-GALACTOSIDASE"/>
    <property type="match status" value="1"/>
</dbReference>
<dbReference type="Pfam" id="PF02929">
    <property type="entry name" value="Bgal_small_N"/>
    <property type="match status" value="1"/>
</dbReference>
<dbReference type="Pfam" id="PF00703">
    <property type="entry name" value="Glyco_hydro_2"/>
    <property type="match status" value="1"/>
</dbReference>
<dbReference type="Pfam" id="PF02836">
    <property type="entry name" value="Glyco_hydro_2_C"/>
    <property type="match status" value="1"/>
</dbReference>
<dbReference type="Pfam" id="PF02837">
    <property type="entry name" value="Glyco_hydro_2_N"/>
    <property type="match status" value="1"/>
</dbReference>
<dbReference type="Pfam" id="PF16353">
    <property type="entry name" value="LacZ_4"/>
    <property type="match status" value="1"/>
</dbReference>
<dbReference type="PRINTS" id="PR00132">
    <property type="entry name" value="GLHYDRLASE2"/>
</dbReference>
<dbReference type="SMART" id="SM01038">
    <property type="entry name" value="Bgal_small_N"/>
    <property type="match status" value="1"/>
</dbReference>
<dbReference type="SUPFAM" id="SSF51445">
    <property type="entry name" value="(Trans)glycosidases"/>
    <property type="match status" value="1"/>
</dbReference>
<dbReference type="SUPFAM" id="SSF49303">
    <property type="entry name" value="beta-Galactosidase/glucuronidase domain"/>
    <property type="match status" value="2"/>
</dbReference>
<dbReference type="SUPFAM" id="SSF74650">
    <property type="entry name" value="Galactose mutarotase-like"/>
    <property type="match status" value="1"/>
</dbReference>
<dbReference type="SUPFAM" id="SSF49785">
    <property type="entry name" value="Galactose-binding domain-like"/>
    <property type="match status" value="1"/>
</dbReference>
<dbReference type="PROSITE" id="PS00719">
    <property type="entry name" value="GLYCOSYL_HYDROL_F2_1"/>
    <property type="match status" value="1"/>
</dbReference>
<dbReference type="PROSITE" id="PS00608">
    <property type="entry name" value="GLYCOSYL_HYDROL_F2_2"/>
    <property type="match status" value="1"/>
</dbReference>
<protein>
    <recommendedName>
        <fullName>Beta-galactosidase</fullName>
        <shortName>Beta-gal</shortName>
        <ecNumber>3.2.1.23</ecNumber>
    </recommendedName>
    <alternativeName>
        <fullName>Lactase</fullName>
    </alternativeName>
</protein>